<accession>P0CA04</accession>
<feature type="initiator methionine" description="Removed" evidence="1">
    <location>
        <position position="1"/>
    </location>
</feature>
<feature type="chain" id="PRO_0000454849" description="p5">
    <location>
        <begin position="2"/>
        <end position="44"/>
    </location>
</feature>
<feature type="chain" id="PRO_0000373440" description="Polyprotein pp220" evidence="3">
    <location>
        <begin position="45"/>
        <end position="2475"/>
    </location>
</feature>
<feature type="chain" id="PRO_0000373441" description="p34" evidence="3">
    <location>
        <begin position="46"/>
        <end position="368"/>
    </location>
</feature>
<feature type="chain" id="PRO_0000373442" description="p14" evidence="3">
    <location>
        <begin position="369"/>
        <end position="522"/>
    </location>
</feature>
<feature type="chain" id="PRO_0000373443" description="p37" evidence="3">
    <location>
        <begin position="523"/>
        <end position="893"/>
    </location>
</feature>
<feature type="chain" id="PRO_0000373444" description="p150" evidence="3">
    <location>
        <begin position="894"/>
        <end position="2475"/>
    </location>
</feature>
<feature type="coiled-coil region" evidence="3">
    <location>
        <begin position="2184"/>
        <end position="2211"/>
    </location>
</feature>
<feature type="site" description="Cleavage; by viral protease S273R" evidence="3">
    <location>
        <begin position="44"/>
        <end position="45"/>
    </location>
</feature>
<feature type="site" description="Cleavage; by viral protease S273R" evidence="3">
    <location>
        <begin position="368"/>
        <end position="369"/>
    </location>
</feature>
<feature type="site" description="Cleavage; by viral protease S273R" evidence="3">
    <location>
        <begin position="522"/>
        <end position="523"/>
    </location>
</feature>
<feature type="site" description="Cleavage; by viral protease S273R" evidence="3">
    <location>
        <begin position="893"/>
        <end position="894"/>
    </location>
</feature>
<feature type="lipid moiety-binding region" description="N-myristoyl glycine; by host" evidence="1">
    <location>
        <position position="2"/>
    </location>
</feature>
<name>PP220_ASFWA</name>
<protein>
    <recommendedName>
        <fullName evidence="2">Polyprotein pp220</fullName>
    </recommendedName>
    <alternativeName>
        <fullName>220 kDa polyprotein</fullName>
    </alternativeName>
    <component>
        <recommendedName>
            <fullName evidence="2">p34</fullName>
        </recommendedName>
    </component>
    <component>
        <recommendedName>
            <fullName evidence="2">p14</fullName>
        </recommendedName>
    </component>
    <component>
        <recommendedName>
            <fullName evidence="2">p37</fullName>
        </recommendedName>
    </component>
    <component>
        <recommendedName>
            <fullName evidence="2">p150</fullName>
        </recommendedName>
    </component>
    <component>
        <recommendedName>
            <fullName evidence="2">p5</fullName>
        </recommendedName>
    </component>
</protein>
<evidence type="ECO:0000250" key="1"/>
<evidence type="ECO:0000250" key="2">
    <source>
        <dbReference type="UniProtKB" id="Q08358"/>
    </source>
</evidence>
<evidence type="ECO:0000255" key="3"/>
<evidence type="ECO:0000305" key="4"/>
<proteinExistence type="inferred from homology"/>
<reference key="1">
    <citation type="submission" date="2003-03" db="EMBL/GenBank/DDBJ databases">
        <title>African swine fever virus genomes.</title>
        <authorList>
            <person name="Kutish G.F."/>
            <person name="Rock D.L."/>
        </authorList>
    </citation>
    <scope>NUCLEOTIDE SEQUENCE [LARGE SCALE GENOMIC DNA]</scope>
</reference>
<comment type="function">
    <molecule>Polyprotein pp220</molecule>
    <text evidence="2">Essential for the core assembly. Its myristoyl moiety may function as a membrane-anchoring signal to bind the developing core shell to the inner viral envelope.</text>
</comment>
<comment type="function">
    <molecule>p34</molecule>
    <text evidence="2">The structural protein p34 is a component of the virus core shell.</text>
</comment>
<comment type="function">
    <molecule>p14</molecule>
    <text evidence="2">The structural protein p14 is a component of the virus core shell.</text>
</comment>
<comment type="function">
    <molecule>p37</molecule>
    <text evidence="2">The structural protein p37 is a component of the virus core shell.</text>
</comment>
<comment type="function">
    <molecule>p150</molecule>
    <text evidence="2">The structural protein p150 is a component of the virus core shell.</text>
</comment>
<comment type="subcellular location">
    <molecule>Polyprotein pp220</molecule>
    <subcellularLocation>
        <location evidence="2">Host cytoplasm</location>
        <location evidence="2">Host perinuclear region</location>
    </subcellularLocation>
    <text evidence="2">Found in perinuclear cytoplasmic viral factories during assembly.</text>
</comment>
<comment type="subcellular location">
    <molecule>p34</molecule>
    <subcellularLocation>
        <location evidence="2">Virion</location>
    </subcellularLocation>
    <subcellularLocation>
        <location evidence="2">Host cytoplasm</location>
        <location evidence="2">Host perinuclear region</location>
    </subcellularLocation>
    <text evidence="2">Localizes to the viral factory at 16 hpi (By similarity). In the virion, located in the core shell, which functions like a matrix between the DNA-containing nucleoid and the inner envelope (By similarity).</text>
</comment>
<comment type="subcellular location">
    <molecule>p14</molecule>
    <subcellularLocation>
        <location evidence="2">Virion</location>
    </subcellularLocation>
    <subcellularLocation>
        <location>Host cytoplasm</location>
        <location>Host perinuclear region</location>
    </subcellularLocation>
    <text evidence="2">Found in perinuclear cytoplasmic viral factories during assembly. In the virion, located in the core shell, which functions like a matrix between the DNA-containing nucleoid and the inner envelope (By similarity).</text>
</comment>
<comment type="subcellular location">
    <molecule>p37</molecule>
    <subcellularLocation>
        <location evidence="2">Virion</location>
    </subcellularLocation>
    <subcellularLocation>
        <location evidence="2">Host cytoplasm</location>
        <location evidence="2">Host perinuclear region</location>
    </subcellularLocation>
    <subcellularLocation>
        <location evidence="2">Host nucleus</location>
    </subcellularLocation>
    <text evidence="2">Found in perinuclear cytoplasmic viral factories during assembly. In the virion, located in the core shell, which functions like a matrix between the DNA-containing nucleoid and the inner envelope (By similarity).</text>
</comment>
<comment type="subcellular location">
    <molecule>p150</molecule>
    <subcellularLocation>
        <location evidence="2">Virion</location>
    </subcellularLocation>
    <subcellularLocation>
        <location evidence="2">Host cytoplasm</location>
        <location evidence="2">Host perinuclear region</location>
    </subcellularLocation>
    <text evidence="2">Found in perinuclear cytoplasmic viral factories during assembly. In the virion, located in the core shell, which functions like a matrix between the DNA-containing nucleoid and the inner envelope (By similarity).</text>
</comment>
<comment type="subcellular location">
    <molecule>p5</molecule>
    <subcellularLocation>
        <location evidence="2">Virion</location>
    </subcellularLocation>
</comment>
<comment type="induction">
    <molecule>Polyprotein pp220</molecule>
    <text evidence="2">Expressed in the late phase of the viral replicative cycle.</text>
</comment>
<comment type="PTM">
    <molecule>Polyprotein pp220</molecule>
    <text>The polyprotein is not glycosylated.</text>
</comment>
<comment type="PTM">
    <molecule>Polyprotein pp220</molecule>
    <text evidence="2">Specific enzymatic cleavages in vivo by the viral pS273R protease yield mature proteins.</text>
</comment>
<comment type="similarity">
    <text evidence="4">Belongs to the asfivirus polyprotein pp220 family.</text>
</comment>
<organism>
    <name type="scientific">African swine fever virus (isolate Warthog/Namibia/Wart80/1980)</name>
    <name type="common">ASFV</name>
    <dbReference type="NCBI Taxonomy" id="561444"/>
    <lineage>
        <taxon>Viruses</taxon>
        <taxon>Varidnaviria</taxon>
        <taxon>Bamfordvirae</taxon>
        <taxon>Nucleocytoviricota</taxon>
        <taxon>Pokkesviricetes</taxon>
        <taxon>Asfuvirales</taxon>
        <taxon>Asfarviridae</taxon>
        <taxon>Asfivirus</taxon>
        <taxon>African swine fever virus</taxon>
    </lineage>
</organism>
<organismHost>
    <name type="scientific">Ornithodoros</name>
    <name type="common">relapsing fever ticks</name>
    <dbReference type="NCBI Taxonomy" id="6937"/>
</organismHost>
<organismHost>
    <name type="scientific">Phacochoerus aethiopicus</name>
    <name type="common">Warthog</name>
    <dbReference type="NCBI Taxonomy" id="85517"/>
</organismHost>
<organismHost>
    <name type="scientific">Phacochoerus africanus</name>
    <name type="common">Warthog</name>
    <dbReference type="NCBI Taxonomy" id="41426"/>
</organismHost>
<organismHost>
    <name type="scientific">Potamochoerus larvatus</name>
    <name type="common">Bushpig</name>
    <dbReference type="NCBI Taxonomy" id="273792"/>
</organismHost>
<organismHost>
    <name type="scientific">Sus scrofa</name>
    <name type="common">Pig</name>
    <dbReference type="NCBI Taxonomy" id="9823"/>
</organismHost>
<gene>
    <name type="ordered locus">War-102</name>
</gene>
<keyword id="KW-0175">Coiled coil</keyword>
<keyword id="KW-1035">Host cytoplasm</keyword>
<keyword id="KW-1048">Host nucleus</keyword>
<keyword id="KW-0426">Late protein</keyword>
<keyword id="KW-0449">Lipoprotein</keyword>
<keyword id="KW-0519">Myristate</keyword>
<keyword id="KW-0946">Virion</keyword>
<dbReference type="EMBL" id="AY261366">
    <property type="status" value="NOT_ANNOTATED_CDS"/>
    <property type="molecule type" value="Genomic_DNA"/>
</dbReference>
<dbReference type="SMR" id="P0CA04"/>
<dbReference type="Proteomes" id="UP000000858">
    <property type="component" value="Segment"/>
</dbReference>
<dbReference type="GO" id="GO:0042025">
    <property type="term" value="C:host cell nucleus"/>
    <property type="evidence" value="ECO:0007669"/>
    <property type="project" value="UniProtKB-SubCell"/>
</dbReference>
<dbReference type="GO" id="GO:0044220">
    <property type="term" value="C:host cell perinuclear region of cytoplasm"/>
    <property type="evidence" value="ECO:0007669"/>
    <property type="project" value="UniProtKB-SubCell"/>
</dbReference>
<dbReference type="GO" id="GO:0044423">
    <property type="term" value="C:virion component"/>
    <property type="evidence" value="ECO:0007669"/>
    <property type="project" value="UniProtKB-KW"/>
</dbReference>
<sequence>MGNRGSSTSSRPPPSSEANIYAKLQDHIQRQTRPFSGGGYFNGGGDKNPVQHIKDYHIDSVSSKAKLRIIEGIIRAIAKIGFKVDTKQPIEDILKDIKKQLPDPRAGSTFVKNAEKQETVCKMIADAINQEFIDLGQDKLIDTTEGAASICRQIVLYINSLTHGLRAEYLDVHGSIENTLENIKLLNDAIKQLHERMVTEVTKAAPNEEVINAVTMIEAVYRRLLNEQNLQINILTNFIDNILTPTQKELDKLQTDEVDIIKLLNDTNSVLGTKNFGKVLSYTLCNLGIAASVANKINKALQKVGLKVEQYLQSKNWAEFDKELDLKRFSGLVSAENIAEFEKAVNLLRQTFNERHKILENSCAKKGGDEEKTPLDRRIEAQRLDRKHILMEFLNKSTQAYNDFLENVKKIGIKLVKEIALTPNITRLRDALSRINDMGTIALDLSLIGFYTNAAAREERETFLTQFMLVKNVLEEQSKIDPNFKNLYDSCSRLLQIIDFYTDIVQKKYGGGEDCECTRVGGAALTVEELGLSKAARSQVDLNQAINTFMYYYYVAQIYSNLTHNKQEFQSYEENYATILGDAIAGRLMQLDTEKNARINSPAVDLARGHVGPNPGGAQEEDWKATVSAIELEYDVKRRFYRALEGLDLYLKNITKTFVNNIDSIQTVQQMLDGVRIIGRWFTEATGDTLAQVFESFPTSAGNDSNVFTDNAPAGHYYEKVAAEIQQGRSVGTLRPVRASQAKNIRDLIGRSLSNFQALKNIINAFARIGDMLGGEELRQMVPMSPLQIYKTLLEYIQHSALSVGLKNLNQSEIGGQRVALARTPEEAAQRVYLSTVRVNDALSTRWETEDVFFTFMLKSMAAKIFIVLGIYDMFERPEPVYKLIPTRMILGGADELEPEVIPEAAELYFRLPRLAEFYQKLFSFRDENVQISMLPELEGIFSGLIRIIFMRPIELINIGDYSETEIRQLIKEINVIYQHFNLEYGEQEATKKALIHFVNEINRRFGVITRTEWEKFQRIVQEARTMNDFGMMNQTNYSILPDEDGYTQSSQLLPSDRFISPSSQPTPKWRPALYNIDSVDVQTGMLQPNSQWDLVQKFRKQLSEMFEDPSLQQELGKVSYQELIRQAINELKKDHTDKIQIVSKLIQGSESLADTDVNKIFLFHETVITGLNLLSAIYVLLNNFRNNIKGLDLDTIQKSIIEWLRETQAANVNHANLIDWLGRKHGAISEIRNPGLVVKENDARLSRVYPDPTTNATAPQDQNLVTETLFAWIVPYVGIPAGGGVRAEQELAARYLVDNQRIMQLLLTNIFEMTSSFNKMVQVRFPETSTAQVHLDFTGLISLIDSLMADTKYFLNLLRPHIDKNIIQYYENRSNPGSFYWLEEHLIDKLIKPPTDAGGRPLPGGELGLEGVNQIINKTYTLLTKPYNVLQLQGGAQRRDAANIQINNNPQPSERFEQYGRVFSRLVFYDALENNSGLRVEQVVLGDFRLSNLIRTNNAQEENALSYWDNIALRTYANVNDAANNLRRYRLYGSDHGIQNNRSMMMVFNQLVASYIARFYDAPSGKIYLNLINAFANGNFSQAVMEMGYAHPDLARNNNAFGHRGDPTEQSVLLLSLGLILQRLIKDTNRQGLSQHLISTLTEIPIYLKENYRANLPLFNKMFNILISQGELLKQFIQYTNVQLARPNLMGLLGANNDSIIYYNNNNVPTTGLSVGQAALRGIGGVFRPNVTLMPLGDAQNNTSDIVRKRLVAVIDGIIRGSHTLADSAMEVLHELTDHPIYLETEEHFIQNYMSRYNKEPLMPFSLSLYYLRDLRIENNEVYDPLLYPNLESGSPEFKLLYGTRKLLGNDPVQLSDMPGVQLIMKNYNETVVAREQITPTRFEHFYTHAIQALRFIINIRSFKTVMMYNENTFGGVNLISENRDDKPIITAGIGMNAVYSLRKTLQDVISFVESSYQEEQINHIHKIVSPKGQTRTLGSNRERERIFNLFDMNIIPINVNALMRSIPLANIYNYDYSFEEIACLMYGISAEKVRSLDTTAPQPDVAEVLNIPNRPPINTREFMLKLLINPYVSVSITQYGNELLSKGNAGYMSRIFRGDNALNMGRPKFLSDQIFNKVLFGSLYPTQFDYDEAGPGLAAGIQRGRERWGHPMSIYINQALHEIVRTIRLAETVRGLRNVIDRNQIIGELNAFRTQLEDTRREVNNLIQTPEIQNNPTPEIIAAIQNWVQQYRGQITNLIDLIGNAGQANSMINLIQNITPQTAGAQLTALFNIRGLPAPPPRQPLQNDIEAMQWFMTIVINHPPILIAPFMLLVNNLKEFLNTLERYVYKTPRWLGPGTARIAQPPVGMAPGINMRHHTSYTENSVLTYITEQNREEGPWSIVKQVGVGIQKPTLVHIGKDRFDTRLIRNLIFITNIQRLLRLRLNLELSQFRNVLVSPDHIINPSITEYGFSITGPSETFSDKQYDSDIRIL</sequence>